<protein>
    <recommendedName>
        <fullName evidence="1">Large ribosomal subunit protein uL18</fullName>
    </recommendedName>
    <alternativeName>
        <fullName evidence="2">50S ribosomal protein L18</fullName>
    </alternativeName>
</protein>
<reference key="1">
    <citation type="journal article" date="2006" name="Nat. Biotechnol.">
        <title>Complete genome sequence of the entomopathogenic and metabolically versatile soil bacterium Pseudomonas entomophila.</title>
        <authorList>
            <person name="Vodovar N."/>
            <person name="Vallenet D."/>
            <person name="Cruveiller S."/>
            <person name="Rouy Z."/>
            <person name="Barbe V."/>
            <person name="Acosta C."/>
            <person name="Cattolico L."/>
            <person name="Jubin C."/>
            <person name="Lajus A."/>
            <person name="Segurens B."/>
            <person name="Vacherie B."/>
            <person name="Wincker P."/>
            <person name="Weissenbach J."/>
            <person name="Lemaitre B."/>
            <person name="Medigue C."/>
            <person name="Boccard F."/>
        </authorList>
    </citation>
    <scope>NUCLEOTIDE SEQUENCE [LARGE SCALE GENOMIC DNA]</scope>
    <source>
        <strain>L48</strain>
    </source>
</reference>
<dbReference type="EMBL" id="CT573326">
    <property type="protein sequence ID" value="CAK13452.1"/>
    <property type="molecule type" value="Genomic_DNA"/>
</dbReference>
<dbReference type="RefSeq" id="WP_011531893.1">
    <property type="nucleotide sequence ID" value="NC_008027.1"/>
</dbReference>
<dbReference type="SMR" id="Q1IFV0"/>
<dbReference type="STRING" id="384676.PSEEN0506"/>
<dbReference type="GeneID" id="93546176"/>
<dbReference type="KEGG" id="pen:PSEEN0506"/>
<dbReference type="eggNOG" id="COG0256">
    <property type="taxonomic scope" value="Bacteria"/>
</dbReference>
<dbReference type="HOGENOM" id="CLU_098841_0_1_6"/>
<dbReference type="OrthoDB" id="9810939at2"/>
<dbReference type="Proteomes" id="UP000000658">
    <property type="component" value="Chromosome"/>
</dbReference>
<dbReference type="GO" id="GO:0022625">
    <property type="term" value="C:cytosolic large ribosomal subunit"/>
    <property type="evidence" value="ECO:0007669"/>
    <property type="project" value="TreeGrafter"/>
</dbReference>
<dbReference type="GO" id="GO:0008097">
    <property type="term" value="F:5S rRNA binding"/>
    <property type="evidence" value="ECO:0007669"/>
    <property type="project" value="TreeGrafter"/>
</dbReference>
<dbReference type="GO" id="GO:0003735">
    <property type="term" value="F:structural constituent of ribosome"/>
    <property type="evidence" value="ECO:0007669"/>
    <property type="project" value="InterPro"/>
</dbReference>
<dbReference type="GO" id="GO:0006412">
    <property type="term" value="P:translation"/>
    <property type="evidence" value="ECO:0007669"/>
    <property type="project" value="UniProtKB-UniRule"/>
</dbReference>
<dbReference type="CDD" id="cd00432">
    <property type="entry name" value="Ribosomal_L18_L5e"/>
    <property type="match status" value="1"/>
</dbReference>
<dbReference type="FunFam" id="3.30.420.100:FF:000001">
    <property type="entry name" value="50S ribosomal protein L18"/>
    <property type="match status" value="1"/>
</dbReference>
<dbReference type="Gene3D" id="3.30.420.100">
    <property type="match status" value="1"/>
</dbReference>
<dbReference type="HAMAP" id="MF_01337_B">
    <property type="entry name" value="Ribosomal_uL18_B"/>
    <property type="match status" value="1"/>
</dbReference>
<dbReference type="InterPro" id="IPR004389">
    <property type="entry name" value="Ribosomal_uL18_bac-type"/>
</dbReference>
<dbReference type="InterPro" id="IPR005484">
    <property type="entry name" value="Ribosomal_uL18_bac/euk"/>
</dbReference>
<dbReference type="NCBIfam" id="TIGR00060">
    <property type="entry name" value="L18_bact"/>
    <property type="match status" value="1"/>
</dbReference>
<dbReference type="PANTHER" id="PTHR12899">
    <property type="entry name" value="39S RIBOSOMAL PROTEIN L18, MITOCHONDRIAL"/>
    <property type="match status" value="1"/>
</dbReference>
<dbReference type="PANTHER" id="PTHR12899:SF3">
    <property type="entry name" value="LARGE RIBOSOMAL SUBUNIT PROTEIN UL18M"/>
    <property type="match status" value="1"/>
</dbReference>
<dbReference type="Pfam" id="PF00861">
    <property type="entry name" value="Ribosomal_L18p"/>
    <property type="match status" value="1"/>
</dbReference>
<dbReference type="SUPFAM" id="SSF53137">
    <property type="entry name" value="Translational machinery components"/>
    <property type="match status" value="1"/>
</dbReference>
<sequence>MTDKKVTRLRRARKARLKMHELEAVRLCVFRSSQHIYAQVISADGSKVLASASTLDKELRDGATGNIDAATKVGKLVAERAKAAGVSQVAFDRSGFKYHGRVKALADAAREGGLEF</sequence>
<keyword id="KW-0687">Ribonucleoprotein</keyword>
<keyword id="KW-0689">Ribosomal protein</keyword>
<keyword id="KW-0694">RNA-binding</keyword>
<keyword id="KW-0699">rRNA-binding</keyword>
<gene>
    <name evidence="1" type="primary">rplR</name>
    <name type="ordered locus">PSEEN0506</name>
</gene>
<comment type="function">
    <text evidence="1">This is one of the proteins that bind and probably mediate the attachment of the 5S RNA into the large ribosomal subunit, where it forms part of the central protuberance.</text>
</comment>
<comment type="subunit">
    <text evidence="1">Part of the 50S ribosomal subunit; part of the 5S rRNA/L5/L18/L25 subcomplex. Contacts the 5S and 23S rRNAs.</text>
</comment>
<comment type="similarity">
    <text evidence="1">Belongs to the universal ribosomal protein uL18 family.</text>
</comment>
<organism>
    <name type="scientific">Pseudomonas entomophila (strain L48)</name>
    <dbReference type="NCBI Taxonomy" id="384676"/>
    <lineage>
        <taxon>Bacteria</taxon>
        <taxon>Pseudomonadati</taxon>
        <taxon>Pseudomonadota</taxon>
        <taxon>Gammaproteobacteria</taxon>
        <taxon>Pseudomonadales</taxon>
        <taxon>Pseudomonadaceae</taxon>
        <taxon>Pseudomonas</taxon>
    </lineage>
</organism>
<feature type="chain" id="PRO_1000053087" description="Large ribosomal subunit protein uL18">
    <location>
        <begin position="1"/>
        <end position="116"/>
    </location>
</feature>
<evidence type="ECO:0000255" key="1">
    <source>
        <dbReference type="HAMAP-Rule" id="MF_01337"/>
    </source>
</evidence>
<evidence type="ECO:0000305" key="2"/>
<proteinExistence type="inferred from homology"/>
<name>RL18_PSEE4</name>
<accession>Q1IFV0</accession>